<protein>
    <recommendedName>
        <fullName evidence="1">DNA gyrase subunit B</fullName>
        <ecNumber evidence="1">5.6.2.2</ecNumber>
    </recommendedName>
</protein>
<sequence>MTTEEAAAQYGADSIKVLKGLDAVRKRPGMYIGDTDDGSGLHHMVYEVVDNAIDEALAGHATKVQVILNADGSVTVTDDGRGIPVDMHEGEGVSAAEVIMTQLHAGGKFDQNSYKVSGGLHGVGVSVVNALSDWLELLIHRNGKVHQMRFERGDAVTSLKVTGDSPVRTEGPKAGETLTGTEVTFFPSKDTFAFIEFDRKTLEHRLRELAFLNSGVTIWFKDHRDVEPWEEKLFYEGGIEAFVRHLDKAKTPLLKAPIAVKGVKDKVEIDLALWWNDSYHEQMLCFTNNIPQRDGGTHLSAFRAALTRIITSYAESSGILKKEKVSLGGEDSREGLTCVLSVKVPDPKFSSQTKDKLVSSEVRPAVEGLVSEGLSTWFEEHPNEAKAIVTKIAEAAAAREAARKARELTRRKSALDITSLPGKLADCSERDPAKSEIFIVEGDSAGGSAKQARNRDNQAVLPLRGKILNVERARFDKMLSSDQIGTLITALGAGIGRDDFNPDKVRYHKIVLMTDADVDGAHIRTLLLTFFYRQMPELIERGYIYIAQPPLYKASKGKSSRYLKDDAEMDAFLVDEGVDGAELDLASGERMTGQDLLALVQTCRSAKANIDRLAARAPATAIEQAALSGLLGESPNAAAAATRLDLYAEEGDGPWSGERGDTGFVFSRVRRGVSERVVLDDVLLHAADARRLAERAVKLTEIFSGRAIFRRKDKSTTVRGPLDLVNAVLDAGRKGLTIQRYKGLGEMNPDQLWETTLDAEARTLLQVRVNHADDADDMFSRLMGDLVEPRREFIQENALDAEVDV</sequence>
<evidence type="ECO:0000255" key="1">
    <source>
        <dbReference type="HAMAP-Rule" id="MF_01898"/>
    </source>
</evidence>
<keyword id="KW-0067">ATP-binding</keyword>
<keyword id="KW-0963">Cytoplasm</keyword>
<keyword id="KW-0238">DNA-binding</keyword>
<keyword id="KW-0413">Isomerase</keyword>
<keyword id="KW-0460">Magnesium</keyword>
<keyword id="KW-0479">Metal-binding</keyword>
<keyword id="KW-0547">Nucleotide-binding</keyword>
<keyword id="KW-1185">Reference proteome</keyword>
<keyword id="KW-0799">Topoisomerase</keyword>
<accession>P0CAX1</accession>
<accession>P48197</accession>
<organism>
    <name type="scientific">Caulobacter vibrioides (strain ATCC 19089 / CIP 103742 / CB 15)</name>
    <name type="common">Caulobacter crescentus</name>
    <dbReference type="NCBI Taxonomy" id="190650"/>
    <lineage>
        <taxon>Bacteria</taxon>
        <taxon>Pseudomonadati</taxon>
        <taxon>Pseudomonadota</taxon>
        <taxon>Alphaproteobacteria</taxon>
        <taxon>Caulobacterales</taxon>
        <taxon>Caulobacteraceae</taxon>
        <taxon>Caulobacter</taxon>
    </lineage>
</organism>
<proteinExistence type="inferred from homology"/>
<dbReference type="EC" id="5.6.2.2" evidence="1"/>
<dbReference type="EMBL" id="AE005673">
    <property type="protein sequence ID" value="AAK22147.1"/>
    <property type="molecule type" value="Genomic_DNA"/>
</dbReference>
<dbReference type="PIR" id="G87268">
    <property type="entry name" value="G87268"/>
</dbReference>
<dbReference type="RefSeq" id="NP_418979.1">
    <property type="nucleotide sequence ID" value="NC_002696.2"/>
</dbReference>
<dbReference type="SMR" id="P0CAX1"/>
<dbReference type="STRING" id="190650.CC_0160"/>
<dbReference type="EnsemblBacteria" id="AAK22147">
    <property type="protein sequence ID" value="AAK22147"/>
    <property type="gene ID" value="CC_0160"/>
</dbReference>
<dbReference type="KEGG" id="ccr:CC_0160"/>
<dbReference type="PATRIC" id="fig|190650.5.peg.156"/>
<dbReference type="eggNOG" id="COG0187">
    <property type="taxonomic scope" value="Bacteria"/>
</dbReference>
<dbReference type="HOGENOM" id="CLU_006146_0_1_5"/>
<dbReference type="BioCyc" id="CAULO:CC0160-MONOMER"/>
<dbReference type="Proteomes" id="UP000001816">
    <property type="component" value="Chromosome"/>
</dbReference>
<dbReference type="GO" id="GO:0005694">
    <property type="term" value="C:chromosome"/>
    <property type="evidence" value="ECO:0007669"/>
    <property type="project" value="InterPro"/>
</dbReference>
<dbReference type="GO" id="GO:0005737">
    <property type="term" value="C:cytoplasm"/>
    <property type="evidence" value="ECO:0007669"/>
    <property type="project" value="UniProtKB-SubCell"/>
</dbReference>
<dbReference type="GO" id="GO:0005524">
    <property type="term" value="F:ATP binding"/>
    <property type="evidence" value="ECO:0007669"/>
    <property type="project" value="UniProtKB-UniRule"/>
</dbReference>
<dbReference type="GO" id="GO:0003677">
    <property type="term" value="F:DNA binding"/>
    <property type="evidence" value="ECO:0007669"/>
    <property type="project" value="UniProtKB-KW"/>
</dbReference>
<dbReference type="GO" id="GO:0003918">
    <property type="term" value="F:DNA topoisomerase type II (double strand cut, ATP-hydrolyzing) activity"/>
    <property type="evidence" value="ECO:0007669"/>
    <property type="project" value="UniProtKB-UniRule"/>
</dbReference>
<dbReference type="GO" id="GO:0046872">
    <property type="term" value="F:metal ion binding"/>
    <property type="evidence" value="ECO:0007669"/>
    <property type="project" value="UniProtKB-KW"/>
</dbReference>
<dbReference type="GO" id="GO:0006265">
    <property type="term" value="P:DNA topological change"/>
    <property type="evidence" value="ECO:0007669"/>
    <property type="project" value="UniProtKB-UniRule"/>
</dbReference>
<dbReference type="GO" id="GO:0006261">
    <property type="term" value="P:DNA-templated DNA replication"/>
    <property type="evidence" value="ECO:0007669"/>
    <property type="project" value="UniProtKB-UniRule"/>
</dbReference>
<dbReference type="CDD" id="cd16928">
    <property type="entry name" value="HATPase_GyrB-like"/>
    <property type="match status" value="1"/>
</dbReference>
<dbReference type="CDD" id="cd00822">
    <property type="entry name" value="TopoII_Trans_DNA_gyrase"/>
    <property type="match status" value="1"/>
</dbReference>
<dbReference type="CDD" id="cd03366">
    <property type="entry name" value="TOPRIM_TopoIIA_GyrB"/>
    <property type="match status" value="1"/>
</dbReference>
<dbReference type="FunFam" id="3.30.230.10:FF:000005">
    <property type="entry name" value="DNA gyrase subunit B"/>
    <property type="match status" value="1"/>
</dbReference>
<dbReference type="FunFam" id="3.30.565.10:FF:000002">
    <property type="entry name" value="DNA gyrase subunit B"/>
    <property type="match status" value="1"/>
</dbReference>
<dbReference type="FunFam" id="3.40.50.670:FF:000007">
    <property type="entry name" value="DNA gyrase subunit B"/>
    <property type="match status" value="1"/>
</dbReference>
<dbReference type="Gene3D" id="3.30.230.10">
    <property type="match status" value="1"/>
</dbReference>
<dbReference type="Gene3D" id="3.40.50.670">
    <property type="match status" value="2"/>
</dbReference>
<dbReference type="Gene3D" id="3.30.565.10">
    <property type="entry name" value="Histidine kinase-like ATPase, C-terminal domain"/>
    <property type="match status" value="1"/>
</dbReference>
<dbReference type="HAMAP" id="MF_01898">
    <property type="entry name" value="GyrB"/>
    <property type="match status" value="1"/>
</dbReference>
<dbReference type="InterPro" id="IPR002288">
    <property type="entry name" value="DNA_gyrase_B_C"/>
</dbReference>
<dbReference type="InterPro" id="IPR011557">
    <property type="entry name" value="GyrB"/>
</dbReference>
<dbReference type="InterPro" id="IPR049353">
    <property type="entry name" value="GyrB_hook"/>
</dbReference>
<dbReference type="InterPro" id="IPR036890">
    <property type="entry name" value="HATPase_C_sf"/>
</dbReference>
<dbReference type="InterPro" id="IPR020568">
    <property type="entry name" value="Ribosomal_Su5_D2-typ_SF"/>
</dbReference>
<dbReference type="InterPro" id="IPR014721">
    <property type="entry name" value="Ribsml_uS5_D2-typ_fold_subgr"/>
</dbReference>
<dbReference type="InterPro" id="IPR001241">
    <property type="entry name" value="Topo_IIA"/>
</dbReference>
<dbReference type="InterPro" id="IPR013760">
    <property type="entry name" value="Topo_IIA-like_dom_sf"/>
</dbReference>
<dbReference type="InterPro" id="IPR000565">
    <property type="entry name" value="Topo_IIA_B"/>
</dbReference>
<dbReference type="InterPro" id="IPR013759">
    <property type="entry name" value="Topo_IIA_B_C"/>
</dbReference>
<dbReference type="InterPro" id="IPR013506">
    <property type="entry name" value="Topo_IIA_bsu_dom2"/>
</dbReference>
<dbReference type="InterPro" id="IPR018522">
    <property type="entry name" value="TopoIIA_CS"/>
</dbReference>
<dbReference type="InterPro" id="IPR006171">
    <property type="entry name" value="TOPRIM_dom"/>
</dbReference>
<dbReference type="InterPro" id="IPR034160">
    <property type="entry name" value="TOPRIM_GyrB"/>
</dbReference>
<dbReference type="NCBIfam" id="TIGR01059">
    <property type="entry name" value="gyrB"/>
    <property type="match status" value="1"/>
</dbReference>
<dbReference type="NCBIfam" id="NF004189">
    <property type="entry name" value="PRK05644.1"/>
    <property type="match status" value="1"/>
</dbReference>
<dbReference type="NCBIfam" id="NF011501">
    <property type="entry name" value="PRK14939.1"/>
    <property type="match status" value="1"/>
</dbReference>
<dbReference type="PANTHER" id="PTHR45866:SF1">
    <property type="entry name" value="DNA GYRASE SUBUNIT B, MITOCHONDRIAL"/>
    <property type="match status" value="1"/>
</dbReference>
<dbReference type="PANTHER" id="PTHR45866">
    <property type="entry name" value="DNA GYRASE/TOPOISOMERASE SUBUNIT B"/>
    <property type="match status" value="1"/>
</dbReference>
<dbReference type="Pfam" id="PF00204">
    <property type="entry name" value="DNA_gyraseB"/>
    <property type="match status" value="1"/>
</dbReference>
<dbReference type="Pfam" id="PF00986">
    <property type="entry name" value="DNA_gyraseB_C"/>
    <property type="match status" value="1"/>
</dbReference>
<dbReference type="Pfam" id="PF21249">
    <property type="entry name" value="GyrB_hook"/>
    <property type="match status" value="1"/>
</dbReference>
<dbReference type="Pfam" id="PF02518">
    <property type="entry name" value="HATPase_c"/>
    <property type="match status" value="1"/>
</dbReference>
<dbReference type="Pfam" id="PF01751">
    <property type="entry name" value="Toprim"/>
    <property type="match status" value="1"/>
</dbReference>
<dbReference type="PRINTS" id="PR01159">
    <property type="entry name" value="DNAGYRASEB"/>
</dbReference>
<dbReference type="PRINTS" id="PR00418">
    <property type="entry name" value="TPI2FAMILY"/>
</dbReference>
<dbReference type="SMART" id="SM00387">
    <property type="entry name" value="HATPase_c"/>
    <property type="match status" value="1"/>
</dbReference>
<dbReference type="SMART" id="SM00433">
    <property type="entry name" value="TOP2c"/>
    <property type="match status" value="1"/>
</dbReference>
<dbReference type="SUPFAM" id="SSF55874">
    <property type="entry name" value="ATPase domain of HSP90 chaperone/DNA topoisomerase II/histidine kinase"/>
    <property type="match status" value="1"/>
</dbReference>
<dbReference type="SUPFAM" id="SSF54211">
    <property type="entry name" value="Ribosomal protein S5 domain 2-like"/>
    <property type="match status" value="1"/>
</dbReference>
<dbReference type="SUPFAM" id="SSF56719">
    <property type="entry name" value="Type II DNA topoisomerase"/>
    <property type="match status" value="1"/>
</dbReference>
<dbReference type="PROSITE" id="PS00177">
    <property type="entry name" value="TOPOISOMERASE_II"/>
    <property type="match status" value="1"/>
</dbReference>
<dbReference type="PROSITE" id="PS50880">
    <property type="entry name" value="TOPRIM"/>
    <property type="match status" value="1"/>
</dbReference>
<name>GYRB_CAUVC</name>
<reference key="1">
    <citation type="journal article" date="2001" name="Proc. Natl. Acad. Sci. U.S.A.">
        <title>Complete genome sequence of Caulobacter crescentus.</title>
        <authorList>
            <person name="Nierman W.C."/>
            <person name="Feldblyum T.V."/>
            <person name="Laub M.T."/>
            <person name="Paulsen I.T."/>
            <person name="Nelson K.E."/>
            <person name="Eisen J.A."/>
            <person name="Heidelberg J.F."/>
            <person name="Alley M.R.K."/>
            <person name="Ohta N."/>
            <person name="Maddock J.R."/>
            <person name="Potocka I."/>
            <person name="Nelson W.C."/>
            <person name="Newton A."/>
            <person name="Stephens C."/>
            <person name="Phadke N.D."/>
            <person name="Ely B."/>
            <person name="DeBoy R.T."/>
            <person name="Dodson R.J."/>
            <person name="Durkin A.S."/>
            <person name="Gwinn M.L."/>
            <person name="Haft D.H."/>
            <person name="Kolonay J.F."/>
            <person name="Smit J."/>
            <person name="Craven M.B."/>
            <person name="Khouri H.M."/>
            <person name="Shetty J."/>
            <person name="Berry K.J."/>
            <person name="Utterback T.R."/>
            <person name="Tran K."/>
            <person name="Wolf A.M."/>
            <person name="Vamathevan J.J."/>
            <person name="Ermolaeva M.D."/>
            <person name="White O."/>
            <person name="Salzberg S.L."/>
            <person name="Venter J.C."/>
            <person name="Shapiro L."/>
            <person name="Fraser C.M."/>
        </authorList>
    </citation>
    <scope>NUCLEOTIDE SEQUENCE [LARGE SCALE GENOMIC DNA]</scope>
    <source>
        <strain>ATCC 19089 / CIP 103742 / CB 15</strain>
    </source>
</reference>
<feature type="chain" id="PRO_0000145302" description="DNA gyrase subunit B">
    <location>
        <begin position="1"/>
        <end position="805"/>
    </location>
</feature>
<feature type="domain" description="Toprim" evidence="1">
    <location>
        <begin position="435"/>
        <end position="550"/>
    </location>
</feature>
<feature type="binding site" evidence="1">
    <location>
        <position position="441"/>
    </location>
    <ligand>
        <name>Mg(2+)</name>
        <dbReference type="ChEBI" id="CHEBI:18420"/>
        <label>1</label>
        <note>catalytic</note>
    </ligand>
</feature>
<feature type="binding site" evidence="1">
    <location>
        <position position="515"/>
    </location>
    <ligand>
        <name>Mg(2+)</name>
        <dbReference type="ChEBI" id="CHEBI:18420"/>
        <label>1</label>
        <note>catalytic</note>
    </ligand>
</feature>
<feature type="binding site" evidence="1">
    <location>
        <position position="515"/>
    </location>
    <ligand>
        <name>Mg(2+)</name>
        <dbReference type="ChEBI" id="CHEBI:18420"/>
        <label>2</label>
    </ligand>
</feature>
<feature type="binding site" evidence="1">
    <location>
        <position position="517"/>
    </location>
    <ligand>
        <name>Mg(2+)</name>
        <dbReference type="ChEBI" id="CHEBI:18420"/>
        <label>2</label>
    </ligand>
</feature>
<feature type="site" description="Interaction with DNA" evidence="1">
    <location>
        <position position="466"/>
    </location>
</feature>
<feature type="site" description="Interaction with DNA" evidence="1">
    <location>
        <position position="469"/>
    </location>
</feature>
<gene>
    <name evidence="1" type="primary">gyrB</name>
    <name type="ordered locus">CC_0160</name>
</gene>
<comment type="function">
    <text evidence="1">A type II topoisomerase that negatively supercoils closed circular double-stranded (ds) DNA in an ATP-dependent manner to modulate DNA topology and maintain chromosomes in an underwound state. Negative supercoiling favors strand separation, and DNA replication, transcription, recombination and repair, all of which involve strand separation. Also able to catalyze the interconversion of other topological isomers of dsDNA rings, including catenanes and knotted rings. Type II topoisomerases break and join 2 DNA strands simultaneously in an ATP-dependent manner.</text>
</comment>
<comment type="catalytic activity">
    <reaction evidence="1">
        <text>ATP-dependent breakage, passage and rejoining of double-stranded DNA.</text>
        <dbReference type="EC" id="5.6.2.2"/>
    </reaction>
</comment>
<comment type="cofactor">
    <cofactor evidence="1">
        <name>Mg(2+)</name>
        <dbReference type="ChEBI" id="CHEBI:18420"/>
    </cofactor>
    <cofactor evidence="1">
        <name>Mn(2+)</name>
        <dbReference type="ChEBI" id="CHEBI:29035"/>
    </cofactor>
    <cofactor evidence="1">
        <name>Ca(2+)</name>
        <dbReference type="ChEBI" id="CHEBI:29108"/>
    </cofactor>
    <text evidence="1">Binds two Mg(2+) per subunit. The magnesium ions form salt bridges with both the protein and the DNA. Can also accept other divalent metal cations, such as Mn(2+) or Ca(2+).</text>
</comment>
<comment type="subunit">
    <text evidence="1">Heterotetramer, composed of two GyrA and two GyrB chains. In the heterotetramer, GyrA contains the active site tyrosine that forms a transient covalent intermediate with DNA, while GyrB binds cofactors and catalyzes ATP hydrolysis.</text>
</comment>
<comment type="subcellular location">
    <subcellularLocation>
        <location evidence="1">Cytoplasm</location>
    </subcellularLocation>
</comment>
<comment type="miscellaneous">
    <text evidence="1">Few gyrases are as efficient as E.coli at forming negative supercoils. Not all organisms have 2 type II topoisomerases; in organisms with a single type II topoisomerase this enzyme also has to decatenate newly replicated chromosomes.</text>
</comment>
<comment type="similarity">
    <text evidence="1">Belongs to the type II topoisomerase GyrB family.</text>
</comment>